<protein>
    <recommendedName>
        <fullName evidence="1">Protein-glutamate methylesterase/protein-glutamine glutaminase 2</fullName>
        <ecNumber evidence="1">3.1.1.61</ecNumber>
        <ecNumber evidence="1">3.5.1.44</ecNumber>
    </recommendedName>
</protein>
<reference key="1">
    <citation type="journal article" date="2005" name="Nat. Biotechnol.">
        <title>Complete genome sequence of the plant commensal Pseudomonas fluorescens Pf-5.</title>
        <authorList>
            <person name="Paulsen I.T."/>
            <person name="Press C.M."/>
            <person name="Ravel J."/>
            <person name="Kobayashi D.Y."/>
            <person name="Myers G.S.A."/>
            <person name="Mavrodi D.V."/>
            <person name="DeBoy R.T."/>
            <person name="Seshadri R."/>
            <person name="Ren Q."/>
            <person name="Madupu R."/>
            <person name="Dodson R.J."/>
            <person name="Durkin A.S."/>
            <person name="Brinkac L.M."/>
            <person name="Daugherty S.C."/>
            <person name="Sullivan S.A."/>
            <person name="Rosovitz M.J."/>
            <person name="Gwinn M.L."/>
            <person name="Zhou L."/>
            <person name="Schneider D.J."/>
            <person name="Cartinhour S.W."/>
            <person name="Nelson W.C."/>
            <person name="Weidman J."/>
            <person name="Watkins K."/>
            <person name="Tran K."/>
            <person name="Khouri H."/>
            <person name="Pierson E.A."/>
            <person name="Pierson L.S. III"/>
            <person name="Thomashow L.S."/>
            <person name="Loper J.E."/>
        </authorList>
    </citation>
    <scope>NUCLEOTIDE SEQUENCE [LARGE SCALE GENOMIC DNA]</scope>
    <source>
        <strain>ATCC BAA-477 / NRRL B-23932 / Pf-5</strain>
    </source>
</reference>
<accession>Q4KG36</accession>
<feature type="chain" id="PRO_0000225470" description="Protein-glutamate methylesterase/protein-glutamine glutaminase 2">
    <location>
        <begin position="1"/>
        <end position="373"/>
    </location>
</feature>
<feature type="domain" description="Response regulatory" evidence="1">
    <location>
        <begin position="4"/>
        <end position="121"/>
    </location>
</feature>
<feature type="domain" description="CheB-type methylesterase" evidence="1">
    <location>
        <begin position="182"/>
        <end position="370"/>
    </location>
</feature>
<feature type="region of interest" description="Disordered" evidence="2">
    <location>
        <begin position="136"/>
        <end position="181"/>
    </location>
</feature>
<feature type="compositionally biased region" description="Pro residues" evidence="2">
    <location>
        <begin position="143"/>
        <end position="153"/>
    </location>
</feature>
<feature type="compositionally biased region" description="Low complexity" evidence="2">
    <location>
        <begin position="154"/>
        <end position="181"/>
    </location>
</feature>
<feature type="active site" evidence="1">
    <location>
        <position position="197"/>
    </location>
</feature>
<feature type="active site" evidence="1">
    <location>
        <position position="224"/>
    </location>
</feature>
<feature type="active site" evidence="1">
    <location>
        <position position="317"/>
    </location>
</feature>
<feature type="modified residue" description="4-aspartylphosphate" evidence="1">
    <location>
        <position position="55"/>
    </location>
</feature>
<organism>
    <name type="scientific">Pseudomonas fluorescens (strain ATCC BAA-477 / NRRL B-23932 / Pf-5)</name>
    <dbReference type="NCBI Taxonomy" id="220664"/>
    <lineage>
        <taxon>Bacteria</taxon>
        <taxon>Pseudomonadati</taxon>
        <taxon>Pseudomonadota</taxon>
        <taxon>Gammaproteobacteria</taxon>
        <taxon>Pseudomonadales</taxon>
        <taxon>Pseudomonadaceae</taxon>
        <taxon>Pseudomonas</taxon>
    </lineage>
</organism>
<proteinExistence type="inferred from homology"/>
<comment type="function">
    <text evidence="1">Involved in chemotaxis. Part of a chemotaxis signal transduction system that modulates chemotaxis in response to various stimuli. Catalyzes the demethylation of specific methylglutamate residues introduced into the chemoreceptors (methyl-accepting chemotaxis proteins or MCP) by CheR. Also mediates the irreversible deamidation of specific glutamine residues to glutamic acid.</text>
</comment>
<comment type="catalytic activity">
    <reaction evidence="1">
        <text>[protein]-L-glutamate 5-O-methyl ester + H2O = L-glutamyl-[protein] + methanol + H(+)</text>
        <dbReference type="Rhea" id="RHEA:23236"/>
        <dbReference type="Rhea" id="RHEA-COMP:10208"/>
        <dbReference type="Rhea" id="RHEA-COMP:10311"/>
        <dbReference type="ChEBI" id="CHEBI:15377"/>
        <dbReference type="ChEBI" id="CHEBI:15378"/>
        <dbReference type="ChEBI" id="CHEBI:17790"/>
        <dbReference type="ChEBI" id="CHEBI:29973"/>
        <dbReference type="ChEBI" id="CHEBI:82795"/>
        <dbReference type="EC" id="3.1.1.61"/>
    </reaction>
</comment>
<comment type="catalytic activity">
    <reaction evidence="1">
        <text>L-glutaminyl-[protein] + H2O = L-glutamyl-[protein] + NH4(+)</text>
        <dbReference type="Rhea" id="RHEA:16441"/>
        <dbReference type="Rhea" id="RHEA-COMP:10207"/>
        <dbReference type="Rhea" id="RHEA-COMP:10208"/>
        <dbReference type="ChEBI" id="CHEBI:15377"/>
        <dbReference type="ChEBI" id="CHEBI:28938"/>
        <dbReference type="ChEBI" id="CHEBI:29973"/>
        <dbReference type="ChEBI" id="CHEBI:30011"/>
        <dbReference type="EC" id="3.5.1.44"/>
    </reaction>
</comment>
<comment type="subcellular location">
    <subcellularLocation>
        <location evidence="1">Cytoplasm</location>
    </subcellularLocation>
</comment>
<comment type="domain">
    <text evidence="1">Contains a C-terminal catalytic domain, and an N-terminal region which modulates catalytic activity.</text>
</comment>
<comment type="PTM">
    <text evidence="1">Phosphorylated by CheA. Phosphorylation of the N-terminal regulatory domain activates the methylesterase activity.</text>
</comment>
<comment type="similarity">
    <text evidence="1">Belongs to the CheB family.</text>
</comment>
<evidence type="ECO:0000255" key="1">
    <source>
        <dbReference type="HAMAP-Rule" id="MF_00099"/>
    </source>
</evidence>
<evidence type="ECO:0000256" key="2">
    <source>
        <dbReference type="SAM" id="MobiDB-lite"/>
    </source>
</evidence>
<dbReference type="EC" id="3.1.1.61" evidence="1"/>
<dbReference type="EC" id="3.5.1.44" evidence="1"/>
<dbReference type="EMBL" id="CP000076">
    <property type="protein sequence ID" value="AAY90966.1"/>
    <property type="molecule type" value="Genomic_DNA"/>
</dbReference>
<dbReference type="RefSeq" id="WP_011060006.1">
    <property type="nucleotide sequence ID" value="NC_004129.6"/>
</dbReference>
<dbReference type="SMR" id="Q4KG36"/>
<dbReference type="STRING" id="220664.PFL_1671"/>
<dbReference type="KEGG" id="pfl:PFL_1671"/>
<dbReference type="PATRIC" id="fig|220664.5.peg.1710"/>
<dbReference type="eggNOG" id="COG2201">
    <property type="taxonomic scope" value="Bacteria"/>
</dbReference>
<dbReference type="HOGENOM" id="CLU_000445_51_0_6"/>
<dbReference type="Proteomes" id="UP000008540">
    <property type="component" value="Chromosome"/>
</dbReference>
<dbReference type="GO" id="GO:0005737">
    <property type="term" value="C:cytoplasm"/>
    <property type="evidence" value="ECO:0007669"/>
    <property type="project" value="UniProtKB-SubCell"/>
</dbReference>
<dbReference type="GO" id="GO:0000156">
    <property type="term" value="F:phosphorelay response regulator activity"/>
    <property type="evidence" value="ECO:0007669"/>
    <property type="project" value="InterPro"/>
</dbReference>
<dbReference type="GO" id="GO:0008984">
    <property type="term" value="F:protein-glutamate methylesterase activity"/>
    <property type="evidence" value="ECO:0007669"/>
    <property type="project" value="UniProtKB-UniRule"/>
</dbReference>
<dbReference type="GO" id="GO:0050568">
    <property type="term" value="F:protein-glutamine glutaminase activity"/>
    <property type="evidence" value="ECO:0007669"/>
    <property type="project" value="UniProtKB-UniRule"/>
</dbReference>
<dbReference type="GO" id="GO:0006935">
    <property type="term" value="P:chemotaxis"/>
    <property type="evidence" value="ECO:0007669"/>
    <property type="project" value="UniProtKB-UniRule"/>
</dbReference>
<dbReference type="CDD" id="cd16432">
    <property type="entry name" value="CheB_Rec"/>
    <property type="match status" value="1"/>
</dbReference>
<dbReference type="CDD" id="cd17541">
    <property type="entry name" value="REC_CheB-like"/>
    <property type="match status" value="1"/>
</dbReference>
<dbReference type="FunFam" id="3.40.50.2300:FF:000077">
    <property type="entry name" value="Chemotaxis response regulator"/>
    <property type="match status" value="1"/>
</dbReference>
<dbReference type="FunFam" id="3.40.50.180:FF:000001">
    <property type="entry name" value="Protein-glutamate methylesterase/protein-glutamine glutaminase"/>
    <property type="match status" value="1"/>
</dbReference>
<dbReference type="Gene3D" id="3.40.50.2300">
    <property type="match status" value="1"/>
</dbReference>
<dbReference type="Gene3D" id="3.40.50.180">
    <property type="entry name" value="Methylesterase CheB, C-terminal domain"/>
    <property type="match status" value="1"/>
</dbReference>
<dbReference type="HAMAP" id="MF_00099">
    <property type="entry name" value="CheB_chemtxs"/>
    <property type="match status" value="1"/>
</dbReference>
<dbReference type="InterPro" id="IPR008248">
    <property type="entry name" value="CheB-like"/>
</dbReference>
<dbReference type="InterPro" id="IPR035909">
    <property type="entry name" value="CheB_C"/>
</dbReference>
<dbReference type="InterPro" id="IPR011006">
    <property type="entry name" value="CheY-like_superfamily"/>
</dbReference>
<dbReference type="InterPro" id="IPR000673">
    <property type="entry name" value="Sig_transdc_resp-reg_Me-estase"/>
</dbReference>
<dbReference type="InterPro" id="IPR001789">
    <property type="entry name" value="Sig_transdc_resp-reg_receiver"/>
</dbReference>
<dbReference type="NCBIfam" id="NF001965">
    <property type="entry name" value="PRK00742.1"/>
    <property type="match status" value="1"/>
</dbReference>
<dbReference type="PANTHER" id="PTHR42872">
    <property type="entry name" value="PROTEIN-GLUTAMATE METHYLESTERASE/PROTEIN-GLUTAMINE GLUTAMINASE"/>
    <property type="match status" value="1"/>
</dbReference>
<dbReference type="PANTHER" id="PTHR42872:SF3">
    <property type="entry name" value="PROTEIN-GLUTAMATE METHYLESTERASE_PROTEIN-GLUTAMINE GLUTAMINASE 1"/>
    <property type="match status" value="1"/>
</dbReference>
<dbReference type="Pfam" id="PF01339">
    <property type="entry name" value="CheB_methylest"/>
    <property type="match status" value="1"/>
</dbReference>
<dbReference type="Pfam" id="PF00072">
    <property type="entry name" value="Response_reg"/>
    <property type="match status" value="1"/>
</dbReference>
<dbReference type="PIRSF" id="PIRSF000876">
    <property type="entry name" value="RR_chemtxs_CheB"/>
    <property type="match status" value="1"/>
</dbReference>
<dbReference type="SMART" id="SM00448">
    <property type="entry name" value="REC"/>
    <property type="match status" value="1"/>
</dbReference>
<dbReference type="SUPFAM" id="SSF52172">
    <property type="entry name" value="CheY-like"/>
    <property type="match status" value="1"/>
</dbReference>
<dbReference type="SUPFAM" id="SSF52738">
    <property type="entry name" value="Methylesterase CheB, C-terminal domain"/>
    <property type="match status" value="1"/>
</dbReference>
<dbReference type="PROSITE" id="PS50122">
    <property type="entry name" value="CHEB"/>
    <property type="match status" value="1"/>
</dbReference>
<dbReference type="PROSITE" id="PS50110">
    <property type="entry name" value="RESPONSE_REGULATORY"/>
    <property type="match status" value="1"/>
</dbReference>
<gene>
    <name evidence="1" type="primary">cheB2</name>
    <name type="ordered locus">PFL_1671</name>
</gene>
<keyword id="KW-0145">Chemotaxis</keyword>
<keyword id="KW-0963">Cytoplasm</keyword>
<keyword id="KW-0378">Hydrolase</keyword>
<keyword id="KW-0597">Phosphoprotein</keyword>
<name>CHEB2_PSEF5</name>
<sequence length="373" mass="39490">MAVKVLVVDDSGFFRRRVSEILSADSNIQVVGTATNGKEAIDQALALKPDVITMDYEMPMMDGITAVRHIMQRCPTPVLMFSSLTHEGARVTLDALDAGAVDFLPKNFEDISRNPEKVKQLLCEKVHSISRSNRRFSSYSAPAPQPASAPAPAPSSFASSRSPAPAPAPARAAAPAASANSPAPKRKAYKLVAIGTSTGGPVALQRVLTQLPANFPAPIVLIQHMPAAFTKAFAERLDKLCRISVKEAEDGDILRPGLALLAPGGKQMMVDGRGAVKILPGDERLNYKPCVDITFGSAAKSYSDKVLAVVLTGMGADGREGARLLKQGGSAVWAQDEASCVIYGMPMAIVKANLADAVYSLDDIGRHLVEACL</sequence>